<evidence type="ECO:0000255" key="1">
    <source>
        <dbReference type="HAMAP-Rule" id="MF_01690"/>
    </source>
</evidence>
<comment type="function">
    <text evidence="1">Catalyzes the hydrolysis of N-succinyl-L,L-diaminopimelic acid (SDAP), forming succinate and LL-2,6-diaminopimelate (DAP), an intermediate involved in the bacterial biosynthesis of lysine and meso-diaminopimelic acid, an essential component of bacterial cell walls.</text>
</comment>
<comment type="catalytic activity">
    <reaction evidence="1">
        <text>N-succinyl-(2S,6S)-2,6-diaminopimelate + H2O = (2S,6S)-2,6-diaminopimelate + succinate</text>
        <dbReference type="Rhea" id="RHEA:22608"/>
        <dbReference type="ChEBI" id="CHEBI:15377"/>
        <dbReference type="ChEBI" id="CHEBI:30031"/>
        <dbReference type="ChEBI" id="CHEBI:57609"/>
        <dbReference type="ChEBI" id="CHEBI:58087"/>
        <dbReference type="EC" id="3.5.1.18"/>
    </reaction>
</comment>
<comment type="cofactor">
    <cofactor evidence="1">
        <name>Zn(2+)</name>
        <dbReference type="ChEBI" id="CHEBI:29105"/>
    </cofactor>
    <cofactor evidence="1">
        <name>Co(2+)</name>
        <dbReference type="ChEBI" id="CHEBI:48828"/>
    </cofactor>
    <text evidence="1">Binds 2 Zn(2+) or Co(2+) ions per subunit.</text>
</comment>
<comment type="pathway">
    <text evidence="1">Amino-acid biosynthesis; L-lysine biosynthesis via DAP pathway; LL-2,6-diaminopimelate from (S)-tetrahydrodipicolinate (succinylase route): step 3/3.</text>
</comment>
<comment type="subunit">
    <text evidence="1">Homodimer.</text>
</comment>
<comment type="similarity">
    <text evidence="1">Belongs to the peptidase M20A family. DapE subfamily.</text>
</comment>
<dbReference type="EC" id="3.5.1.18" evidence="1"/>
<dbReference type="EMBL" id="CP000880">
    <property type="protein sequence ID" value="ABX20336.1"/>
    <property type="molecule type" value="Genomic_DNA"/>
</dbReference>
<dbReference type="SMR" id="A9MHQ8"/>
<dbReference type="STRING" id="41514.SARI_00399"/>
<dbReference type="MEROPS" id="M20.010"/>
<dbReference type="KEGG" id="ses:SARI_00399"/>
<dbReference type="HOGENOM" id="CLU_021802_4_0_6"/>
<dbReference type="UniPathway" id="UPA00034">
    <property type="reaction ID" value="UER00021"/>
</dbReference>
<dbReference type="Proteomes" id="UP000002084">
    <property type="component" value="Chromosome"/>
</dbReference>
<dbReference type="GO" id="GO:0008777">
    <property type="term" value="F:acetylornithine deacetylase activity"/>
    <property type="evidence" value="ECO:0007669"/>
    <property type="project" value="TreeGrafter"/>
</dbReference>
<dbReference type="GO" id="GO:0050897">
    <property type="term" value="F:cobalt ion binding"/>
    <property type="evidence" value="ECO:0007669"/>
    <property type="project" value="UniProtKB-UniRule"/>
</dbReference>
<dbReference type="GO" id="GO:0009014">
    <property type="term" value="F:succinyl-diaminopimelate desuccinylase activity"/>
    <property type="evidence" value="ECO:0007669"/>
    <property type="project" value="UniProtKB-UniRule"/>
</dbReference>
<dbReference type="GO" id="GO:0008270">
    <property type="term" value="F:zinc ion binding"/>
    <property type="evidence" value="ECO:0007669"/>
    <property type="project" value="UniProtKB-UniRule"/>
</dbReference>
<dbReference type="GO" id="GO:0019877">
    <property type="term" value="P:diaminopimelate biosynthetic process"/>
    <property type="evidence" value="ECO:0007669"/>
    <property type="project" value="UniProtKB-UniRule"/>
</dbReference>
<dbReference type="GO" id="GO:0006526">
    <property type="term" value="P:L-arginine biosynthetic process"/>
    <property type="evidence" value="ECO:0007669"/>
    <property type="project" value="TreeGrafter"/>
</dbReference>
<dbReference type="GO" id="GO:0009089">
    <property type="term" value="P:lysine biosynthetic process via diaminopimelate"/>
    <property type="evidence" value="ECO:0007669"/>
    <property type="project" value="UniProtKB-UniRule"/>
</dbReference>
<dbReference type="CDD" id="cd03891">
    <property type="entry name" value="M20_DapE_proteobac"/>
    <property type="match status" value="1"/>
</dbReference>
<dbReference type="FunFam" id="3.30.70.360:FF:000011">
    <property type="entry name" value="Succinyl-diaminopimelate desuccinylase"/>
    <property type="match status" value="1"/>
</dbReference>
<dbReference type="FunFam" id="3.40.630.10:FF:000005">
    <property type="entry name" value="Succinyl-diaminopimelate desuccinylase"/>
    <property type="match status" value="1"/>
</dbReference>
<dbReference type="FunFam" id="3.40.630.10:FF:000010">
    <property type="entry name" value="Succinyl-diaminopimelate desuccinylase"/>
    <property type="match status" value="1"/>
</dbReference>
<dbReference type="Gene3D" id="3.40.630.10">
    <property type="entry name" value="Zn peptidases"/>
    <property type="match status" value="2"/>
</dbReference>
<dbReference type="HAMAP" id="MF_01690">
    <property type="entry name" value="DapE"/>
    <property type="match status" value="1"/>
</dbReference>
<dbReference type="InterPro" id="IPR001261">
    <property type="entry name" value="ArgE/DapE_CS"/>
</dbReference>
<dbReference type="InterPro" id="IPR036264">
    <property type="entry name" value="Bact_exopeptidase_dim_dom"/>
</dbReference>
<dbReference type="InterPro" id="IPR005941">
    <property type="entry name" value="DapE_proteobac"/>
</dbReference>
<dbReference type="InterPro" id="IPR002933">
    <property type="entry name" value="Peptidase_M20"/>
</dbReference>
<dbReference type="InterPro" id="IPR011650">
    <property type="entry name" value="Peptidase_M20_dimer"/>
</dbReference>
<dbReference type="InterPro" id="IPR050072">
    <property type="entry name" value="Peptidase_M20A"/>
</dbReference>
<dbReference type="NCBIfam" id="TIGR01246">
    <property type="entry name" value="dapE_proteo"/>
    <property type="match status" value="1"/>
</dbReference>
<dbReference type="NCBIfam" id="NF009557">
    <property type="entry name" value="PRK13009.1"/>
    <property type="match status" value="1"/>
</dbReference>
<dbReference type="PANTHER" id="PTHR43808">
    <property type="entry name" value="ACETYLORNITHINE DEACETYLASE"/>
    <property type="match status" value="1"/>
</dbReference>
<dbReference type="PANTHER" id="PTHR43808:SF31">
    <property type="entry name" value="N-ACETYL-L-CITRULLINE DEACETYLASE"/>
    <property type="match status" value="1"/>
</dbReference>
<dbReference type="Pfam" id="PF07687">
    <property type="entry name" value="M20_dimer"/>
    <property type="match status" value="1"/>
</dbReference>
<dbReference type="Pfam" id="PF01546">
    <property type="entry name" value="Peptidase_M20"/>
    <property type="match status" value="1"/>
</dbReference>
<dbReference type="SUPFAM" id="SSF55031">
    <property type="entry name" value="Bacterial exopeptidase dimerisation domain"/>
    <property type="match status" value="1"/>
</dbReference>
<dbReference type="SUPFAM" id="SSF53187">
    <property type="entry name" value="Zn-dependent exopeptidases"/>
    <property type="match status" value="1"/>
</dbReference>
<dbReference type="PROSITE" id="PS00758">
    <property type="entry name" value="ARGE_DAPE_CPG2_1"/>
    <property type="match status" value="1"/>
</dbReference>
<dbReference type="PROSITE" id="PS00759">
    <property type="entry name" value="ARGE_DAPE_CPG2_2"/>
    <property type="match status" value="1"/>
</dbReference>
<keyword id="KW-0028">Amino-acid biosynthesis</keyword>
<keyword id="KW-0170">Cobalt</keyword>
<keyword id="KW-0220">Diaminopimelate biosynthesis</keyword>
<keyword id="KW-0378">Hydrolase</keyword>
<keyword id="KW-0457">Lysine biosynthesis</keyword>
<keyword id="KW-0479">Metal-binding</keyword>
<keyword id="KW-1185">Reference proteome</keyword>
<keyword id="KW-0862">Zinc</keyword>
<accession>A9MHQ8</accession>
<organism>
    <name type="scientific">Salmonella arizonae (strain ATCC BAA-731 / CDC346-86 / RSK2980)</name>
    <dbReference type="NCBI Taxonomy" id="41514"/>
    <lineage>
        <taxon>Bacteria</taxon>
        <taxon>Pseudomonadati</taxon>
        <taxon>Pseudomonadota</taxon>
        <taxon>Gammaproteobacteria</taxon>
        <taxon>Enterobacterales</taxon>
        <taxon>Enterobacteriaceae</taxon>
        <taxon>Salmonella</taxon>
    </lineage>
</organism>
<proteinExistence type="inferred from homology"/>
<sequence length="375" mass="41578">MSCPVIELTQQLIRRPSLSPDDAGCQALMIERLRKIGFTIEHMDFGDTQNFWAWRGRGETLAFAGHTDVVPAGDVDRWINPPFEPTIRDGMLFGRGAADMKGSLAAMVVAAERFVAQHPHHRGRLAFLITSDEEASAKNGTVKVVEALMARNERLDYCLVGEPSSTEIVGDVVKNGRRGSLTCNLTIHGVQGHVAYPHLADNPVHRAAPFLNELVAIEWDRGNDFFPATSMQVANIQAGTGSNNVIPGELFVQFNFRFSTELTDEMIKERVHALLEKHQLRYTVDWWLSGQPFLTARGKLVDAVVNAIEHYNEIKPQLLTTGGTSDGRFIARMGAQVVELGPVNATIHKINECVNAADLQLLARMYQRIMEQLVA</sequence>
<name>DAPE_SALAR</name>
<feature type="chain" id="PRO_0000375712" description="Succinyl-diaminopimelate desuccinylase">
    <location>
        <begin position="1"/>
        <end position="375"/>
    </location>
</feature>
<feature type="active site" evidence="1">
    <location>
        <position position="68"/>
    </location>
</feature>
<feature type="active site" description="Proton acceptor" evidence="1">
    <location>
        <position position="133"/>
    </location>
</feature>
<feature type="binding site" evidence="1">
    <location>
        <position position="66"/>
    </location>
    <ligand>
        <name>Zn(2+)</name>
        <dbReference type="ChEBI" id="CHEBI:29105"/>
        <label>1</label>
    </ligand>
</feature>
<feature type="binding site" evidence="1">
    <location>
        <position position="99"/>
    </location>
    <ligand>
        <name>Zn(2+)</name>
        <dbReference type="ChEBI" id="CHEBI:29105"/>
        <label>1</label>
    </ligand>
</feature>
<feature type="binding site" evidence="1">
    <location>
        <position position="99"/>
    </location>
    <ligand>
        <name>Zn(2+)</name>
        <dbReference type="ChEBI" id="CHEBI:29105"/>
        <label>2</label>
    </ligand>
</feature>
<feature type="binding site" evidence="1">
    <location>
        <position position="134"/>
    </location>
    <ligand>
        <name>Zn(2+)</name>
        <dbReference type="ChEBI" id="CHEBI:29105"/>
        <label>2</label>
    </ligand>
</feature>
<feature type="binding site" evidence="1">
    <location>
        <position position="162"/>
    </location>
    <ligand>
        <name>Zn(2+)</name>
        <dbReference type="ChEBI" id="CHEBI:29105"/>
        <label>1</label>
    </ligand>
</feature>
<feature type="binding site" evidence="1">
    <location>
        <position position="348"/>
    </location>
    <ligand>
        <name>Zn(2+)</name>
        <dbReference type="ChEBI" id="CHEBI:29105"/>
        <label>2</label>
    </ligand>
</feature>
<protein>
    <recommendedName>
        <fullName evidence="1">Succinyl-diaminopimelate desuccinylase</fullName>
        <shortName evidence="1">SDAP desuccinylase</shortName>
        <ecNumber evidence="1">3.5.1.18</ecNumber>
    </recommendedName>
    <alternativeName>
        <fullName evidence="1">N-succinyl-LL-2,6-diaminoheptanedioate amidohydrolase</fullName>
    </alternativeName>
</protein>
<reference key="1">
    <citation type="submission" date="2007-11" db="EMBL/GenBank/DDBJ databases">
        <authorList>
            <consortium name="The Salmonella enterica serovar Arizonae Genome Sequencing Project"/>
            <person name="McClelland M."/>
            <person name="Sanderson E.K."/>
            <person name="Porwollik S."/>
            <person name="Spieth J."/>
            <person name="Clifton W.S."/>
            <person name="Fulton R."/>
            <person name="Chunyan W."/>
            <person name="Wollam A."/>
            <person name="Shah N."/>
            <person name="Pepin K."/>
            <person name="Bhonagiri V."/>
            <person name="Nash W."/>
            <person name="Johnson M."/>
            <person name="Thiruvilangam P."/>
            <person name="Wilson R."/>
        </authorList>
    </citation>
    <scope>NUCLEOTIDE SEQUENCE [LARGE SCALE GENOMIC DNA]</scope>
    <source>
        <strain>ATCC BAA-731 / CDC346-86 / RSK2980</strain>
    </source>
</reference>
<gene>
    <name evidence="1" type="primary">dapE</name>
    <name type="ordered locus">SARI_00399</name>
</gene>